<accession>P57674</accession>
<evidence type="ECO:0000255" key="1">
    <source>
        <dbReference type="HAMAP-Rule" id="MF_00265"/>
    </source>
</evidence>
<organism>
    <name type="scientific">Thermoplasma acidophilum (strain ATCC 25905 / DSM 1728 / JCM 9062 / NBRC 15155 / AMRC-C165)</name>
    <dbReference type="NCBI Taxonomy" id="273075"/>
    <lineage>
        <taxon>Archaea</taxon>
        <taxon>Methanobacteriati</taxon>
        <taxon>Thermoplasmatota</taxon>
        <taxon>Thermoplasmata</taxon>
        <taxon>Thermoplasmatales</taxon>
        <taxon>Thermoplasmataceae</taxon>
        <taxon>Thermoplasma</taxon>
    </lineage>
</organism>
<feature type="chain" id="PRO_0000156049" description="Ribonuclease VapC1">
    <location>
        <begin position="1"/>
        <end position="194"/>
    </location>
</feature>
<feature type="domain" description="PINc" evidence="1">
    <location>
        <begin position="34"/>
        <end position="134"/>
    </location>
</feature>
<feature type="binding site" evidence="1">
    <location>
        <position position="37"/>
    </location>
    <ligand>
        <name>Mg(2+)</name>
        <dbReference type="ChEBI" id="CHEBI:18420"/>
    </ligand>
</feature>
<feature type="binding site" evidence="1">
    <location>
        <position position="150"/>
    </location>
    <ligand>
        <name>Mg(2+)</name>
        <dbReference type="ChEBI" id="CHEBI:18420"/>
    </ligand>
</feature>
<dbReference type="EC" id="3.1.-.-" evidence="1"/>
<dbReference type="EMBL" id="AL445063">
    <property type="protein sequence ID" value="CAC11190.1"/>
    <property type="molecule type" value="Genomic_DNA"/>
</dbReference>
<dbReference type="SMR" id="P57674"/>
<dbReference type="STRING" id="273075.gene:9571257"/>
<dbReference type="PaxDb" id="273075-Ta0041"/>
<dbReference type="EnsemblBacteria" id="CAC11190">
    <property type="protein sequence ID" value="CAC11190"/>
    <property type="gene ID" value="CAC11190"/>
</dbReference>
<dbReference type="KEGG" id="tac:Ta0041"/>
<dbReference type="eggNOG" id="arCOG00721">
    <property type="taxonomic scope" value="Archaea"/>
</dbReference>
<dbReference type="HOGENOM" id="CLU_109674_1_0_2"/>
<dbReference type="InParanoid" id="P57674"/>
<dbReference type="OrthoDB" id="27944at2157"/>
<dbReference type="Proteomes" id="UP000001024">
    <property type="component" value="Chromosome"/>
</dbReference>
<dbReference type="GO" id="GO:0030688">
    <property type="term" value="C:preribosome, small subunit precursor"/>
    <property type="evidence" value="ECO:0007669"/>
    <property type="project" value="TreeGrafter"/>
</dbReference>
<dbReference type="GO" id="GO:0000287">
    <property type="term" value="F:magnesium ion binding"/>
    <property type="evidence" value="ECO:0007669"/>
    <property type="project" value="UniProtKB-UniRule"/>
</dbReference>
<dbReference type="GO" id="GO:0004521">
    <property type="term" value="F:RNA endonuclease activity"/>
    <property type="evidence" value="ECO:0007669"/>
    <property type="project" value="TreeGrafter"/>
</dbReference>
<dbReference type="GO" id="GO:0030490">
    <property type="term" value="P:maturation of SSU-rRNA"/>
    <property type="evidence" value="ECO:0007669"/>
    <property type="project" value="TreeGrafter"/>
</dbReference>
<dbReference type="CDD" id="cd09876">
    <property type="entry name" value="PIN_Nob1-like"/>
    <property type="match status" value="1"/>
</dbReference>
<dbReference type="FunFam" id="3.40.50.1010:FF:000020">
    <property type="entry name" value="20S-pre-rRNA D-site endonuclease NOB1"/>
    <property type="match status" value="1"/>
</dbReference>
<dbReference type="Gene3D" id="2.20.28.10">
    <property type="match status" value="1"/>
</dbReference>
<dbReference type="Gene3D" id="3.40.50.1010">
    <property type="entry name" value="5'-nuclease"/>
    <property type="match status" value="1"/>
</dbReference>
<dbReference type="HAMAP" id="MF_00265">
    <property type="entry name" value="VapC_Nob1"/>
    <property type="match status" value="1"/>
</dbReference>
<dbReference type="InterPro" id="IPR039907">
    <property type="entry name" value="NOB1"/>
</dbReference>
<dbReference type="InterPro" id="IPR029060">
    <property type="entry name" value="PIN-like_dom_sf"/>
</dbReference>
<dbReference type="InterPro" id="IPR002716">
    <property type="entry name" value="PIN_dom"/>
</dbReference>
<dbReference type="InterPro" id="IPR033411">
    <property type="entry name" value="Ribonuclease_PIN"/>
</dbReference>
<dbReference type="InterPro" id="IPR022907">
    <property type="entry name" value="VapC_family"/>
</dbReference>
<dbReference type="NCBIfam" id="NF009148">
    <property type="entry name" value="PRK12496.1-5"/>
    <property type="match status" value="1"/>
</dbReference>
<dbReference type="PANTHER" id="PTHR12814">
    <property type="entry name" value="RNA-BINDING PROTEIN NOB1"/>
    <property type="match status" value="1"/>
</dbReference>
<dbReference type="PANTHER" id="PTHR12814:SF2">
    <property type="entry name" value="RNA-BINDING PROTEIN NOB1"/>
    <property type="match status" value="1"/>
</dbReference>
<dbReference type="Pfam" id="PF17146">
    <property type="entry name" value="PIN_6"/>
    <property type="match status" value="1"/>
</dbReference>
<dbReference type="SMART" id="SM00670">
    <property type="entry name" value="PINc"/>
    <property type="match status" value="1"/>
</dbReference>
<dbReference type="SUPFAM" id="SSF88723">
    <property type="entry name" value="PIN domain-like"/>
    <property type="match status" value="1"/>
</dbReference>
<gene>
    <name evidence="1" type="primary">vapC1</name>
    <name type="ordered locus">Ta0041</name>
</gene>
<sequence>MPWVGSQFHKGDAQTIMALSNVLYQVLIALGMIYVIDTSAIISRNLNLLEGDLMFPSSVIGEIKKGKLRYMIDVLLPMIRVASPDHEYLKIVEETAAKTGDLMNLSQTDKDVLALALQYDATIVTDDYSIQNVASYLNLGFLNANIKRIDKQIAWIYRCTGCKKVFPGPVKVCDICGHEVKRHYDKRKSMIRKV</sequence>
<keyword id="KW-0378">Hydrolase</keyword>
<keyword id="KW-0460">Magnesium</keyword>
<keyword id="KW-0479">Metal-binding</keyword>
<keyword id="KW-0540">Nuclease</keyword>
<keyword id="KW-1185">Reference proteome</keyword>
<keyword id="KW-1277">Toxin-antitoxin system</keyword>
<comment type="function">
    <text evidence="1">Toxic component of a type II toxin-antitoxin (TA) system. An RNase.</text>
</comment>
<comment type="cofactor">
    <cofactor evidence="1">
        <name>Mg(2+)</name>
        <dbReference type="ChEBI" id="CHEBI:18420"/>
    </cofactor>
</comment>
<comment type="similarity">
    <text evidence="1">Belongs to the PINc/VapC protein family.</text>
</comment>
<protein>
    <recommendedName>
        <fullName evidence="1">Ribonuclease VapC1</fullName>
        <shortName evidence="1">RNase VapC1</shortName>
        <ecNumber evidence="1">3.1.-.-</ecNumber>
    </recommendedName>
    <alternativeName>
        <fullName evidence="1">Putative toxin VapC1</fullName>
    </alternativeName>
</protein>
<reference key="1">
    <citation type="journal article" date="2000" name="Nature">
        <title>The genome sequence of the thermoacidophilic scavenger Thermoplasma acidophilum.</title>
        <authorList>
            <person name="Ruepp A."/>
            <person name="Graml W."/>
            <person name="Santos-Martinez M.-L."/>
            <person name="Koretke K.K."/>
            <person name="Volker C."/>
            <person name="Mewes H.-W."/>
            <person name="Frishman D."/>
            <person name="Stocker S."/>
            <person name="Lupas A.N."/>
            <person name="Baumeister W."/>
        </authorList>
    </citation>
    <scope>NUCLEOTIDE SEQUENCE [LARGE SCALE GENOMIC DNA]</scope>
    <source>
        <strain>ATCC 25905 / DSM 1728 / JCM 9062 / NBRC 15155 / AMRC-C165</strain>
    </source>
</reference>
<reference key="2">
    <citation type="journal article" date="2005" name="Nucleic Acids Res.">
        <title>Toxin-antitoxin loci are highly abundant in free-living but lost from host-associated prokaryotes.</title>
        <authorList>
            <person name="Pandey D.P."/>
            <person name="Gerdes K."/>
        </authorList>
    </citation>
    <scope>POSSIBLE FUNCTION</scope>
    <source>
        <strain>ATCC 25905 / DSM 1728 / JCM 9062 / NBRC 15155 / AMRC-C165</strain>
    </source>
</reference>
<name>VAPC1_THEAC</name>
<proteinExistence type="inferred from homology"/>